<keyword id="KW-0511">Multifunctional enzyme</keyword>
<keyword id="KW-0596">Phosphopantetheine</keyword>
<keyword id="KW-0597">Phosphoprotein</keyword>
<keyword id="KW-1185">Reference proteome</keyword>
<keyword id="KW-0808">Transferase</keyword>
<keyword id="KW-0843">Virulence</keyword>
<feature type="chain" id="PRO_0000438571" description="Orsellinic acid synthase">
    <location>
        <begin position="1"/>
        <end position="2211"/>
    </location>
</feature>
<feature type="domain" description="Ketosynthase family 3 (KS3)" evidence="6 12">
    <location>
        <begin position="380"/>
        <end position="805"/>
    </location>
</feature>
<feature type="domain" description="PKS/mFAS DH" evidence="7">
    <location>
        <begin position="1309"/>
        <end position="1629"/>
    </location>
</feature>
<feature type="domain" description="Carrier 1" evidence="5">
    <location>
        <begin position="1681"/>
        <end position="1755"/>
    </location>
</feature>
<feature type="domain" description="Carrier 2" evidence="5">
    <location>
        <begin position="1787"/>
        <end position="1865"/>
    </location>
</feature>
<feature type="region of interest" description="N-terminal acylcarrier protein transacylase domain (SAT)" evidence="4 12">
    <location>
        <begin position="44"/>
        <end position="246"/>
    </location>
</feature>
<feature type="region of interest" description="Malonyl-CoA:ACP transacylase (MAT) domain" evidence="4 12">
    <location>
        <begin position="910"/>
        <end position="1228"/>
    </location>
</feature>
<feature type="region of interest" description="N-terminal hotdog fold" evidence="7">
    <location>
        <begin position="1309"/>
        <end position="1440"/>
    </location>
</feature>
<feature type="region of interest" description="Product template (PT) domain" evidence="4 12">
    <location>
        <begin position="1334"/>
        <end position="1573"/>
    </location>
</feature>
<feature type="region of interest" description="C-terminal hotdog fold" evidence="7">
    <location>
        <begin position="1473"/>
        <end position="1629"/>
    </location>
</feature>
<feature type="region of interest" description="Disordered" evidence="9">
    <location>
        <begin position="1755"/>
        <end position="1786"/>
    </location>
</feature>
<feature type="region of interest" description="Thioesterase (TE) domain" evidence="4 12">
    <location>
        <begin position="1937"/>
        <end position="2204"/>
    </location>
</feature>
<feature type="active site" description="For beta-ketoacyl synthase activity" evidence="6">
    <location>
        <position position="549"/>
    </location>
</feature>
<feature type="active site" description="For beta-ketoacyl synthase activity" evidence="6">
    <location>
        <position position="684"/>
    </location>
</feature>
<feature type="active site" description="For beta-ketoacyl synthase activity" evidence="6">
    <location>
        <position position="724"/>
    </location>
</feature>
<feature type="active site" description="For acyl/malonyl transferase activity" evidence="8">
    <location>
        <position position="1006"/>
    </location>
</feature>
<feature type="active site" description="Proton acceptor; for dehydratase activity" evidence="7">
    <location>
        <position position="1339"/>
    </location>
</feature>
<feature type="active site" description="Proton donor; for dehydratase activity" evidence="7">
    <location>
        <position position="1537"/>
    </location>
</feature>
<feature type="modified residue" description="O-(pantetheine 4'-phosphoryl)serine" evidence="5">
    <location>
        <position position="1715"/>
    </location>
</feature>
<feature type="modified residue" description="O-(pantetheine 4'-phosphoryl)serine" evidence="5">
    <location>
        <position position="1824"/>
    </location>
</feature>
<protein>
    <recommendedName>
        <fullName evidence="2">Orsellinic acid synthase</fullName>
        <shortName evidence="2">OAS</shortName>
        <ecNumber evidence="10">2.3.1.-</ecNumber>
    </recommendedName>
    <alternativeName>
        <fullName evidence="11">Non-reducing polyketide synthase OpS1</fullName>
    </alternativeName>
    <alternativeName>
        <fullName evidence="11">Oosporein biosynthesis protein 1</fullName>
    </alternativeName>
    <alternativeName>
        <fullName evidence="11">Oosporein synthase</fullName>
    </alternativeName>
</protein>
<organism>
    <name type="scientific">Beauveria bassiana (strain ARSEF 2860)</name>
    <name type="common">White muscardine disease fungus</name>
    <name type="synonym">Tritirachium shiotae</name>
    <dbReference type="NCBI Taxonomy" id="655819"/>
    <lineage>
        <taxon>Eukaryota</taxon>
        <taxon>Fungi</taxon>
        <taxon>Dikarya</taxon>
        <taxon>Ascomycota</taxon>
        <taxon>Pezizomycotina</taxon>
        <taxon>Sordariomycetes</taxon>
        <taxon>Hypocreomycetidae</taxon>
        <taxon>Hypocreales</taxon>
        <taxon>Cordycipitaceae</taxon>
        <taxon>Beauveria</taxon>
    </lineage>
</organism>
<reference key="1">
    <citation type="journal article" date="2012" name="Sci. Rep.">
        <title>Genomic perspectives on the evolution of fungal entomopathogenicity in Beauveria bassiana.</title>
        <authorList>
            <person name="Xiao G."/>
            <person name="Ying S.-H."/>
            <person name="Zheng P."/>
            <person name="Wang Z.-L."/>
            <person name="Zhang S."/>
            <person name="Xie X.-Q."/>
            <person name="Shang Y."/>
            <person name="St Leger R.J."/>
            <person name="Zhao G.-P."/>
            <person name="Wang C."/>
            <person name="Feng M.-G."/>
        </authorList>
    </citation>
    <scope>NUCLEOTIDE SEQUENCE [LARGE SCALE GENOMIC DNA]</scope>
    <source>
        <strain>ARSEF 2860</strain>
    </source>
</reference>
<reference key="2">
    <citation type="journal article" date="2015" name="Proc. Natl. Acad. Sci. U.S.A.">
        <title>Fungal biosynthesis of the bibenzoquinone oosporein to evade insect immunity.</title>
        <authorList>
            <person name="Feng P."/>
            <person name="Shang Y."/>
            <person name="Cen K."/>
            <person name="Wang C."/>
        </authorList>
    </citation>
    <scope>FUNCTION</scope>
    <scope>DISRUPTION PHENOTYPE</scope>
    <scope>DOMAIN</scope>
    <scope>INDUCTION</scope>
    <scope>CATALYTIC ACTIVITY</scope>
    <scope>PATHWAY</scope>
</reference>
<dbReference type="EC" id="2.3.1.-" evidence="10"/>
<dbReference type="EMBL" id="JH725181">
    <property type="protein sequence ID" value="EJP62792.1"/>
    <property type="molecule type" value="Genomic_DNA"/>
</dbReference>
<dbReference type="RefSeq" id="XP_008601498.1">
    <property type="nucleotide sequence ID" value="XM_008603276.1"/>
</dbReference>
<dbReference type="SMR" id="J4UHQ6"/>
<dbReference type="STRING" id="655819.J4UHQ6"/>
<dbReference type="ESTHER" id="beab2-ops1">
    <property type="family name" value="Thioesterase"/>
</dbReference>
<dbReference type="GeneID" id="19891191"/>
<dbReference type="HOGENOM" id="CLU_000022_6_4_1"/>
<dbReference type="InParanoid" id="J4UHQ6"/>
<dbReference type="OrthoDB" id="3956at474943"/>
<dbReference type="PHI-base" id="PHI:5037"/>
<dbReference type="Proteomes" id="UP000002762">
    <property type="component" value="Unassembled WGS sequence"/>
</dbReference>
<dbReference type="GO" id="GO:0005835">
    <property type="term" value="C:fatty acid synthase complex"/>
    <property type="evidence" value="ECO:0007669"/>
    <property type="project" value="InterPro"/>
</dbReference>
<dbReference type="GO" id="GO:0004315">
    <property type="term" value="F:3-oxoacyl-[acyl-carrier-protein] synthase activity"/>
    <property type="evidence" value="ECO:0007669"/>
    <property type="project" value="InterPro"/>
</dbReference>
<dbReference type="GO" id="GO:0004312">
    <property type="term" value="F:fatty acid synthase activity"/>
    <property type="evidence" value="ECO:0007669"/>
    <property type="project" value="InterPro"/>
</dbReference>
<dbReference type="GO" id="GO:0031177">
    <property type="term" value="F:phosphopantetheine binding"/>
    <property type="evidence" value="ECO:0007669"/>
    <property type="project" value="InterPro"/>
</dbReference>
<dbReference type="GO" id="GO:0006633">
    <property type="term" value="P:fatty acid biosynthetic process"/>
    <property type="evidence" value="ECO:0007669"/>
    <property type="project" value="InterPro"/>
</dbReference>
<dbReference type="GO" id="GO:0044550">
    <property type="term" value="P:secondary metabolite biosynthetic process"/>
    <property type="evidence" value="ECO:0007669"/>
    <property type="project" value="TreeGrafter"/>
</dbReference>
<dbReference type="CDD" id="cd00833">
    <property type="entry name" value="PKS"/>
    <property type="match status" value="1"/>
</dbReference>
<dbReference type="Gene3D" id="3.30.70.3290">
    <property type="match status" value="1"/>
</dbReference>
<dbReference type="Gene3D" id="3.40.47.10">
    <property type="match status" value="1"/>
</dbReference>
<dbReference type="Gene3D" id="1.10.1200.10">
    <property type="entry name" value="ACP-like"/>
    <property type="match status" value="2"/>
</dbReference>
<dbReference type="Gene3D" id="3.40.50.1820">
    <property type="entry name" value="alpha/beta hydrolase"/>
    <property type="match status" value="1"/>
</dbReference>
<dbReference type="Gene3D" id="3.30.70.250">
    <property type="entry name" value="Malonyl-CoA ACP transacylase, ACP-binding"/>
    <property type="match status" value="1"/>
</dbReference>
<dbReference type="Gene3D" id="3.40.366.10">
    <property type="entry name" value="Malonyl-Coenzyme A Acyl Carrier Protein, domain 2"/>
    <property type="match status" value="3"/>
</dbReference>
<dbReference type="Gene3D" id="3.10.129.110">
    <property type="entry name" value="Polyketide synthase dehydratase"/>
    <property type="match status" value="1"/>
</dbReference>
<dbReference type="InterPro" id="IPR029058">
    <property type="entry name" value="AB_hydrolase_fold"/>
</dbReference>
<dbReference type="InterPro" id="IPR001227">
    <property type="entry name" value="Ac_transferase_dom_sf"/>
</dbReference>
<dbReference type="InterPro" id="IPR036736">
    <property type="entry name" value="ACP-like_sf"/>
</dbReference>
<dbReference type="InterPro" id="IPR014043">
    <property type="entry name" value="Acyl_transferase_dom"/>
</dbReference>
<dbReference type="InterPro" id="IPR016035">
    <property type="entry name" value="Acyl_Trfase/lysoPLipase"/>
</dbReference>
<dbReference type="InterPro" id="IPR003965">
    <property type="entry name" value="Fatty_acid_synthase"/>
</dbReference>
<dbReference type="InterPro" id="IPR018201">
    <property type="entry name" value="Ketoacyl_synth_AS"/>
</dbReference>
<dbReference type="InterPro" id="IPR014031">
    <property type="entry name" value="Ketoacyl_synth_C"/>
</dbReference>
<dbReference type="InterPro" id="IPR014030">
    <property type="entry name" value="Ketoacyl_synth_N"/>
</dbReference>
<dbReference type="InterPro" id="IPR016036">
    <property type="entry name" value="Malonyl_transacylase_ACP-bd"/>
</dbReference>
<dbReference type="InterPro" id="IPR020841">
    <property type="entry name" value="PKS_Beta-ketoAc_synthase_dom"/>
</dbReference>
<dbReference type="InterPro" id="IPR042104">
    <property type="entry name" value="PKS_dehydratase_sf"/>
</dbReference>
<dbReference type="InterPro" id="IPR049900">
    <property type="entry name" value="PKS_mFAS_DH"/>
</dbReference>
<dbReference type="InterPro" id="IPR050091">
    <property type="entry name" value="PKS_NRPS_Biosynth_Enz"/>
</dbReference>
<dbReference type="InterPro" id="IPR020806">
    <property type="entry name" value="PKS_PP-bd"/>
</dbReference>
<dbReference type="InterPro" id="IPR009081">
    <property type="entry name" value="PP-bd_ACP"/>
</dbReference>
<dbReference type="InterPro" id="IPR006162">
    <property type="entry name" value="Ppantetheine_attach_site"/>
</dbReference>
<dbReference type="InterPro" id="IPR032088">
    <property type="entry name" value="SAT"/>
</dbReference>
<dbReference type="InterPro" id="IPR001031">
    <property type="entry name" value="Thioesterase"/>
</dbReference>
<dbReference type="InterPro" id="IPR016039">
    <property type="entry name" value="Thiolase-like"/>
</dbReference>
<dbReference type="PANTHER" id="PTHR43775">
    <property type="entry name" value="FATTY ACID SYNTHASE"/>
    <property type="match status" value="1"/>
</dbReference>
<dbReference type="PANTHER" id="PTHR43775:SF37">
    <property type="entry name" value="SI:DKEY-61P9.11"/>
    <property type="match status" value="1"/>
</dbReference>
<dbReference type="Pfam" id="PF00698">
    <property type="entry name" value="Acyl_transf_1"/>
    <property type="match status" value="1"/>
</dbReference>
<dbReference type="Pfam" id="PF22621">
    <property type="entry name" value="CurL-like_PKS_C"/>
    <property type="match status" value="1"/>
</dbReference>
<dbReference type="Pfam" id="PF00109">
    <property type="entry name" value="ketoacyl-synt"/>
    <property type="match status" value="1"/>
</dbReference>
<dbReference type="Pfam" id="PF02801">
    <property type="entry name" value="Ketoacyl-synt_C"/>
    <property type="match status" value="1"/>
</dbReference>
<dbReference type="Pfam" id="PF00550">
    <property type="entry name" value="PP-binding"/>
    <property type="match status" value="2"/>
</dbReference>
<dbReference type="Pfam" id="PF16073">
    <property type="entry name" value="SAT"/>
    <property type="match status" value="1"/>
</dbReference>
<dbReference type="Pfam" id="PF00975">
    <property type="entry name" value="Thioesterase"/>
    <property type="match status" value="1"/>
</dbReference>
<dbReference type="PRINTS" id="PR01483">
    <property type="entry name" value="FASYNTHASE"/>
</dbReference>
<dbReference type="SMART" id="SM00827">
    <property type="entry name" value="PKS_AT"/>
    <property type="match status" value="1"/>
</dbReference>
<dbReference type="SMART" id="SM00825">
    <property type="entry name" value="PKS_KS"/>
    <property type="match status" value="1"/>
</dbReference>
<dbReference type="SMART" id="SM00823">
    <property type="entry name" value="PKS_PP"/>
    <property type="match status" value="2"/>
</dbReference>
<dbReference type="SUPFAM" id="SSF47336">
    <property type="entry name" value="ACP-like"/>
    <property type="match status" value="2"/>
</dbReference>
<dbReference type="SUPFAM" id="SSF53474">
    <property type="entry name" value="alpha/beta-Hydrolases"/>
    <property type="match status" value="1"/>
</dbReference>
<dbReference type="SUPFAM" id="SSF52151">
    <property type="entry name" value="FabD/lysophospholipase-like"/>
    <property type="match status" value="1"/>
</dbReference>
<dbReference type="SUPFAM" id="SSF55048">
    <property type="entry name" value="Probable ACP-binding domain of malonyl-CoA ACP transacylase"/>
    <property type="match status" value="1"/>
</dbReference>
<dbReference type="SUPFAM" id="SSF53901">
    <property type="entry name" value="Thiolase-like"/>
    <property type="match status" value="1"/>
</dbReference>
<dbReference type="PROSITE" id="PS50075">
    <property type="entry name" value="CARRIER"/>
    <property type="match status" value="2"/>
</dbReference>
<dbReference type="PROSITE" id="PS00606">
    <property type="entry name" value="KS3_1"/>
    <property type="match status" value="1"/>
</dbReference>
<dbReference type="PROSITE" id="PS52004">
    <property type="entry name" value="KS3_2"/>
    <property type="match status" value="1"/>
</dbReference>
<dbReference type="PROSITE" id="PS00012">
    <property type="entry name" value="PHOSPHOPANTETHEINE"/>
    <property type="match status" value="1"/>
</dbReference>
<dbReference type="PROSITE" id="PS52019">
    <property type="entry name" value="PKS_MFAS_DH"/>
    <property type="match status" value="1"/>
</dbReference>
<proteinExistence type="evidence at protein level"/>
<comment type="function">
    <text evidence="10">Non-reducing polyketide synthase; part of the gene cluster that mediates the biosynthesis of the bibenzoquinone oosporein, a metabolite required for fungal virulence that acts by evading host immunity to facilitate fungal multiplication in insects (PubMed:26305932). The non-reducing polyketide synthase OpS1 produces orsellinic acid by condensing acetyl-CoA with 3 malonyl-CoA units (PubMed:26305932). Orsellinic acid is then hydroxylated to benzenetriol by the hydroxylase OpS4 (PubMed:26305932). The intermediate is oxidized either nonenzymatically to 5,5'-dideoxy-oosporein or enzymatically to benzenetetrol by the oxidoreductase OpS7 (PubMed:26305932). The latter is further dimerized to oosporein by the catalase OpS5 (PubMed:26305932). OpS6 probably functions en route for protecting cells against oxidative stress by scavenging any leaked free radical form of benzenetetrol by activating the thiol group of glutathione (PubMed:26305932).</text>
</comment>
<comment type="catalytic activity">
    <reaction evidence="10">
        <text>3 malonyl-CoA + acetyl-CoA + 2 H(+) = orsellinate + 3 CO2 + 4 CoA</text>
        <dbReference type="Rhea" id="RHEA:62972"/>
        <dbReference type="ChEBI" id="CHEBI:15378"/>
        <dbReference type="ChEBI" id="CHEBI:16162"/>
        <dbReference type="ChEBI" id="CHEBI:16526"/>
        <dbReference type="ChEBI" id="CHEBI:57287"/>
        <dbReference type="ChEBI" id="CHEBI:57288"/>
        <dbReference type="ChEBI" id="CHEBI:57384"/>
    </reaction>
    <physiologicalReaction direction="left-to-right" evidence="10">
        <dbReference type="Rhea" id="RHEA:62973"/>
    </physiologicalReaction>
</comment>
<comment type="pathway">
    <text evidence="10">Secondary metabolite biosynthesis.</text>
</comment>
<comment type="induction">
    <text evidence="10">Expression is positively regulated by the oosporein cluster specific regulator OpS3 that binds the promoter at a 5'-CGGA-3' motif (PubMed:26305932). Expression is negatively regulated by the global transcription factor Msn2 that binds the stress-response element 5'-AGGGG-3' (PubMed:26305932).</text>
</comment>
<comment type="domain">
    <text evidence="3">Multidomain protein; including a starter unit:ACP transacylase (SAT) that selects the starter unit; a ketosynthase (KS) that catalyzes repeated decarboxylative condensation to elongate the polyketide backbone; a malonyl-CoA:ACP transacylase (MAT) that selects and transfers the extender unit malonyl-CoA; a product template (PT) domain that controls the immediate cyclization regioselectivity of the reactive polyketide backbone; and an acyl-carrier protein (ACP) that serves as the tether of the growing and completed polyketide via its phosphopantetheinyl arm (By similarity).</text>
</comment>
<comment type="domain">
    <text evidence="1">The release of the polyketide chain from the non-reducing polyketide synthase is mediated by the thioesterase (TE) domain localized at the C-ter of the protein (By similarity).</text>
</comment>
<comment type="disruption phenotype">
    <text evidence="10">Leads to the loss of oosporein production (PubMed:26305932).</text>
</comment>
<name>OPS1_BEAB2</name>
<sequence length="2211" mass="237462">MPSFFPVFSGLGSGSVFSEENVGRAEENALSPECAVLLQSCHRTFREQVSDAIARNILPEDSIDLDDFAEPASLIRPLSKYSRNVVMQHAALYLHQILAYMTSQKELGNLIGSAGFCTGLLPAAVAAASQTSVITLISQSHHFFQVALWIGIRSEQYRVDHLTNDTQDADGESMLPCSYVLEGVSEAAAQDLLHKTNMGNEVFVSAILSPTRVTISGIPTKLSTFISKHLPANCRTTVAVVHSLYHHESLLEVRNLVMADLERQDTLLQARVELSAPILSTKTGKPLALSSVTTLEQVACAILDLIFIEKVDWLNLQQSIVSHTSQDALDRPINIVNYGPGLGMAPSAFAQAQEKDVCIMDAAKISKGSFQNSGASRLAWDDIAIVGMAVELPGASDADTLWQNLVDGYQACSEIPPSRFNVNDYNNGKGSRTLNTKYGNFLENPFLFDAEHFGISRREAKSMDPQQRILLQTAYRALEDAGYVPDTTTSSARDTFGCWIGNATLDYVDNLRSDIDVYYSTGTLRAFLSARISYVFGWSGPSITLDTACSSSIVALHQAARSILAGDCRSALVGAANTITSPDMYLGLDRAHFLSPSGQCKAFDASADGYCRAEGCGVFVIKRLSDALAEGDRIHGVIKAIEINQSGNTHSITHPHVPTQEALFDKMFRESRINPHEISVVEMHGTGTQAGDPNEVESVRRALCKARSPLNPVYLTSLKANIGHAEAVSGIAGLAKLILMTRNGYIPPQVSLKTLNPRIRPLGVDGAAIDANGTEWPRAGPKKARMSMLNNFGAGGSNAAVIIGEHLSQDESEAQQPACGATIFVCGVSAKNDRALVKLQETVADYLTSAGQSRKPPSLADVCATLTSRRQMYNHRVAVVASSLEELAENLRSASSHNVSKSICEAPEAVFIFSGQGSQYLGMGRELIEQYEDFAHTVNVCDGWLVKNNYPSCLAVITGEQRESEDDKVDAHTWQSFQSAIYVIEVALAKLLESWGIRPQAVAGHSLGEYAALVTAGVIRLMDGLKLVAHRAKLMMEQCDLGQTSMLAVNCSAAVITSIIEASTDFEGLAISCNNSETDCVVGGPVPQLVLLKKHLTDRAQVRSKLLDVPMAFHTAAMDPILEEFTAFAAREVRVFPPTLPVVSNVLGRTVAVGEQAFSPEYFAKQCRGTVAFDDGIKHFLALGDCESTPYRWIEIGPHPSVQPMLRGRLGKAATSHIQLTTLKKNVPPASTLSQLLSHFYQTSSGVNWRSVFSRNAHRRFKLIQLPGMPFFPSEFHVPYREMAGEPASTSQSSGDAASNVVPNSFAVHAIQKLSHGASNSCAIYETPAVLLKEFIEGHLVCGYALCPASVYHEMVLAALNDCQSAAGSSVVWGLSKVSYCAPMVYDGNSNQVLRVVITPRLTLPDRYDFAVMSYVAGTDPNERSTVHCRGVVKQSNMASAELKYSRLQASMKGSMDGLKHVGQLGAPAASCVQVFSKRAMYEKIFTRVVEYSDPYQKVETIRIREDTGEALATCVSPAPYLARDSSIPASHAIFMDVLLHVAGFVSNLNLPNDVMGICKEVGGATTLRAPVVRDGACAPFDVYCSTFDTQDSDGRSFTISNAYAVDSSGVMAVFKGMVFQHVKIPLIEQALKRATRSSPNAAVSASHPAQPKRRNDVTSFVNAQSVERMALPRAAAPVRAAPEVSVPELVAKVCGLDAGQLGVDSRLDAHGVDSLMGIEIAAALSSALGVDVLPDTLGSCDTVGDIERLCEALSPTPVGNDVDNDSPTPGSERGSDSAISTPASVSTVDASSIDMVQIVAELCGARAEAVSPDSELRALGVDSLMFLELADRLQDLDRGIALSSNDLADCQTIGDIERLIVKRPGTPAYQSGISTKIYPEAVHASSEAVRLSAQQPATQISLLASEEAVLPQIERLLHLSQQPEEIQVGSLDRKFSGKSPLFLIHDGSGICTHYRGLRPLGRRVLALHDPKFLIQSSKQRSWASLTTMANEYASSISSTMGMTGGEDCILGGWSFGGVVAFEAARILMSRGHRVKGVVLIDSPPPIGHIPLSESIISAVTAQPAEKDAAAGSTTASKCVSPVASAIRKLVQQSFRICAGLIGDFGTSAELQQRGLSNKPVGPVPRVILLRSAVGWTPPRGYTGAAVEEMENPWLQDRRDRSLATAGWEILTGGPIQCLDIPGNHFQVFDAPNIAAVSAALVDACSEFELK</sequence>
<accession>J4UHQ6</accession>
<gene>
    <name evidence="11" type="primary">OpS1</name>
    <name evidence="11" type="synonym">PKS9</name>
    <name type="ORF">BBA_08179</name>
</gene>
<evidence type="ECO:0000250" key="1">
    <source>
        <dbReference type="UniProtKB" id="Q5ATJ7"/>
    </source>
</evidence>
<evidence type="ECO:0000250" key="2">
    <source>
        <dbReference type="UniProtKB" id="Q5AUX1"/>
    </source>
</evidence>
<evidence type="ECO:0000250" key="3">
    <source>
        <dbReference type="UniProtKB" id="Q5B0D0"/>
    </source>
</evidence>
<evidence type="ECO:0000255" key="4"/>
<evidence type="ECO:0000255" key="5">
    <source>
        <dbReference type="PROSITE-ProRule" id="PRU00258"/>
    </source>
</evidence>
<evidence type="ECO:0000255" key="6">
    <source>
        <dbReference type="PROSITE-ProRule" id="PRU01348"/>
    </source>
</evidence>
<evidence type="ECO:0000255" key="7">
    <source>
        <dbReference type="PROSITE-ProRule" id="PRU01363"/>
    </source>
</evidence>
<evidence type="ECO:0000255" key="8">
    <source>
        <dbReference type="PROSITE-ProRule" id="PRU10022"/>
    </source>
</evidence>
<evidence type="ECO:0000256" key="9">
    <source>
        <dbReference type="SAM" id="MobiDB-lite"/>
    </source>
</evidence>
<evidence type="ECO:0000269" key="10">
    <source>
    </source>
</evidence>
<evidence type="ECO:0000303" key="11">
    <source>
    </source>
</evidence>
<evidence type="ECO:0000305" key="12">
    <source>
    </source>
</evidence>